<accession>Q5FMA2</accession>
<organism>
    <name type="scientific">Lactobacillus acidophilus (strain ATCC 700396 / NCK56 / N2 / NCFM)</name>
    <dbReference type="NCBI Taxonomy" id="272621"/>
    <lineage>
        <taxon>Bacteria</taxon>
        <taxon>Bacillati</taxon>
        <taxon>Bacillota</taxon>
        <taxon>Bacilli</taxon>
        <taxon>Lactobacillales</taxon>
        <taxon>Lactobacillaceae</taxon>
        <taxon>Lactobacillus</taxon>
    </lineage>
</organism>
<dbReference type="EMBL" id="CP000033">
    <property type="protein sequence ID" value="AAV42172.1"/>
    <property type="molecule type" value="Genomic_DNA"/>
</dbReference>
<dbReference type="RefSeq" id="WP_003549012.1">
    <property type="nucleotide sequence ID" value="NC_006814.3"/>
</dbReference>
<dbReference type="RefSeq" id="YP_193203.1">
    <property type="nucleotide sequence ID" value="NC_006814.3"/>
</dbReference>
<dbReference type="SMR" id="Q5FMA2"/>
<dbReference type="STRING" id="272621.LBA0279"/>
<dbReference type="GeneID" id="93290616"/>
<dbReference type="KEGG" id="lac:LBA0279"/>
<dbReference type="PATRIC" id="fig|272621.13.peg.264"/>
<dbReference type="eggNOG" id="COG1281">
    <property type="taxonomic scope" value="Bacteria"/>
</dbReference>
<dbReference type="HOGENOM" id="CLU_054493_1_0_9"/>
<dbReference type="OrthoDB" id="9776534at2"/>
<dbReference type="BioCyc" id="LACI272621:G1G49-270-MONOMER"/>
<dbReference type="Proteomes" id="UP000006381">
    <property type="component" value="Chromosome"/>
</dbReference>
<dbReference type="GO" id="GO:0005737">
    <property type="term" value="C:cytoplasm"/>
    <property type="evidence" value="ECO:0007669"/>
    <property type="project" value="UniProtKB-SubCell"/>
</dbReference>
<dbReference type="GO" id="GO:0044183">
    <property type="term" value="F:protein folding chaperone"/>
    <property type="evidence" value="ECO:0007669"/>
    <property type="project" value="TreeGrafter"/>
</dbReference>
<dbReference type="GO" id="GO:0051082">
    <property type="term" value="F:unfolded protein binding"/>
    <property type="evidence" value="ECO:0007669"/>
    <property type="project" value="UniProtKB-UniRule"/>
</dbReference>
<dbReference type="GO" id="GO:0042026">
    <property type="term" value="P:protein refolding"/>
    <property type="evidence" value="ECO:0007669"/>
    <property type="project" value="TreeGrafter"/>
</dbReference>
<dbReference type="CDD" id="cd00498">
    <property type="entry name" value="Hsp33"/>
    <property type="match status" value="1"/>
</dbReference>
<dbReference type="Gene3D" id="3.55.30.10">
    <property type="entry name" value="Hsp33 domain"/>
    <property type="match status" value="1"/>
</dbReference>
<dbReference type="Gene3D" id="3.90.1280.10">
    <property type="entry name" value="HSP33 redox switch-like"/>
    <property type="match status" value="1"/>
</dbReference>
<dbReference type="HAMAP" id="MF_00117">
    <property type="entry name" value="HslO"/>
    <property type="match status" value="1"/>
</dbReference>
<dbReference type="InterPro" id="IPR000397">
    <property type="entry name" value="Heat_shock_Hsp33"/>
</dbReference>
<dbReference type="InterPro" id="IPR016154">
    <property type="entry name" value="Heat_shock_Hsp33_C"/>
</dbReference>
<dbReference type="InterPro" id="IPR016153">
    <property type="entry name" value="Heat_shock_Hsp33_N"/>
</dbReference>
<dbReference type="NCBIfam" id="NF001033">
    <property type="entry name" value="PRK00114.1"/>
    <property type="match status" value="1"/>
</dbReference>
<dbReference type="PANTHER" id="PTHR30111">
    <property type="entry name" value="33 KDA CHAPERONIN"/>
    <property type="match status" value="1"/>
</dbReference>
<dbReference type="PANTHER" id="PTHR30111:SF1">
    <property type="entry name" value="33 KDA CHAPERONIN"/>
    <property type="match status" value="1"/>
</dbReference>
<dbReference type="Pfam" id="PF01430">
    <property type="entry name" value="HSP33"/>
    <property type="match status" value="1"/>
</dbReference>
<dbReference type="PIRSF" id="PIRSF005261">
    <property type="entry name" value="Heat_shock_Hsp33"/>
    <property type="match status" value="1"/>
</dbReference>
<dbReference type="SUPFAM" id="SSF64397">
    <property type="entry name" value="Hsp33 domain"/>
    <property type="match status" value="1"/>
</dbReference>
<dbReference type="SUPFAM" id="SSF118352">
    <property type="entry name" value="HSP33 redox switch-like"/>
    <property type="match status" value="1"/>
</dbReference>
<name>HSLO_LACAC</name>
<reference key="1">
    <citation type="journal article" date="2005" name="Proc. Natl. Acad. Sci. U.S.A.">
        <title>Complete genome sequence of the probiotic lactic acid bacterium Lactobacillus acidophilus NCFM.</title>
        <authorList>
            <person name="Altermann E."/>
            <person name="Russell W.M."/>
            <person name="Azcarate-Peril M.A."/>
            <person name="Barrangou R."/>
            <person name="Buck B.L."/>
            <person name="McAuliffe O."/>
            <person name="Souther N."/>
            <person name="Dobson A."/>
            <person name="Duong T."/>
            <person name="Callanan M."/>
            <person name="Lick S."/>
            <person name="Hamrick A."/>
            <person name="Cano R."/>
            <person name="Klaenhammer T.R."/>
        </authorList>
    </citation>
    <scope>NUCLEOTIDE SEQUENCE [LARGE SCALE GENOMIC DNA]</scope>
    <source>
        <strain>ATCC 700396 / NCK56 / N2 / NCFM</strain>
    </source>
</reference>
<gene>
    <name evidence="1" type="primary">hslO</name>
    <name type="ordered locus">LBA0279</name>
</gene>
<evidence type="ECO:0000255" key="1">
    <source>
        <dbReference type="HAMAP-Rule" id="MF_00117"/>
    </source>
</evidence>
<proteinExistence type="inferred from homology"/>
<keyword id="KW-0143">Chaperone</keyword>
<keyword id="KW-0963">Cytoplasm</keyword>
<keyword id="KW-1015">Disulfide bond</keyword>
<keyword id="KW-0676">Redox-active center</keyword>
<keyword id="KW-1185">Reference proteome</keyword>
<keyword id="KW-0862">Zinc</keyword>
<comment type="function">
    <text evidence="1">Redox regulated molecular chaperone. Protects both thermally unfolding and oxidatively damaged proteins from irreversible aggregation. Plays an important role in the bacterial defense system toward oxidative stress.</text>
</comment>
<comment type="subcellular location">
    <subcellularLocation>
        <location evidence="1">Cytoplasm</location>
    </subcellularLocation>
</comment>
<comment type="PTM">
    <text evidence="1">Under oxidizing conditions two disulfide bonds are formed involving the reactive cysteines. Under reducing conditions zinc is bound to the reactive cysteines and the protein is inactive.</text>
</comment>
<comment type="similarity">
    <text evidence="1">Belongs to the HSP33 family.</text>
</comment>
<sequence length="296" mass="32187">MNDYLVKSIDKTKNLRLLTITAKGVVSEAQKRHDLWSASSAVLGRTLVGSLLLAGAELTDKEELTVRLLGNGPVGPAIVTATADLKVKGYVKNPHIALPPKENGHIDVKKAVGQGWFEVTKDLGLKEPYTGQVPIVSGEIAEDFAYYLTKSEQIPSAVGLSVFVNPNNSIGEAGGFMLQALPGASDALIDKTIKRINELPALSTSFLDGMTPEDLARKILGTDCKILEKDDVAFSCDCSKEKYAGILETLKSSQLKDMINEDHGAELICNFCGNKYHYTEDELKEILAKKKDDKDY</sequence>
<feature type="chain" id="PRO_0000238072" description="33 kDa chaperonin">
    <location>
        <begin position="1"/>
        <end position="296"/>
    </location>
</feature>
<feature type="disulfide bond" description="Redox-active" evidence="1">
    <location>
        <begin position="236"/>
        <end position="238"/>
    </location>
</feature>
<feature type="disulfide bond" description="Redox-active" evidence="1">
    <location>
        <begin position="269"/>
        <end position="272"/>
    </location>
</feature>
<protein>
    <recommendedName>
        <fullName evidence="1">33 kDa chaperonin</fullName>
    </recommendedName>
    <alternativeName>
        <fullName evidence="1">Heat shock protein 33 homolog</fullName>
        <shortName evidence="1">HSP33</shortName>
    </alternativeName>
</protein>